<keyword id="KW-0067">ATP-binding</keyword>
<keyword id="KW-0143">Chaperone</keyword>
<keyword id="KW-0547">Nucleotide-binding</keyword>
<keyword id="KW-0539">Nucleus</keyword>
<gene>
    <name type="primary">HSP70</name>
</gene>
<comment type="function">
    <text>May act as a chaperone.</text>
</comment>
<comment type="subcellular location">
    <subcellularLocation>
        <location evidence="1">Nucleus</location>
    </subcellularLocation>
</comment>
<comment type="similarity">
    <text evidence="1">Belongs to the heat shock protein 70 family.</text>
</comment>
<organism>
    <name type="scientific">Encephalitozoon hellem</name>
    <name type="common">Microsporidian parasite</name>
    <dbReference type="NCBI Taxonomy" id="27973"/>
    <lineage>
        <taxon>Eukaryota</taxon>
        <taxon>Fungi</taxon>
        <taxon>Fungi incertae sedis</taxon>
        <taxon>Microsporidia</taxon>
        <taxon>Unikaryonidae</taxon>
        <taxon>Encephalitozoon</taxon>
    </lineage>
</organism>
<sequence>MPNANALSKKPSSNIIGIDLGTTNSCVSVVKNGEPVIIENQEGERTTPSVVSILKDEVLVGSQSKSKILTHPKNTVFASKRLIGRKLEDPEVKKYVKGLPFDTTSHCNGDVWIKVDGKKYSPAQIGAFILSKLKRSAESFLNHSVVKSVITVPAYFNDSQRQATKDAGRIAGLDVVRVINEPTAAALAYGLDKSARGNIAVYDLGGGTFDISILELSDGVFHVKATNGDTFLGGEDLDNEVVSFIVKDFMEKEGIDLGRDVNALARIKECAEKVKKDLSSSVVSRIDIPYICNVGGEAKHLSREITRSEFEKIVEKIVNRTIEPCKKALADAGLDSADIKHVILVGGMTRMPYVRKVVKEIFGIEPSTEINPDEAVAKGAALQGGVLAGEVDNVLLLDVAPLSLGIELLGGVFSKIMRRNTTIPFKETQIFSTSEDNQTDVDIKVYQGERAMAADNKYLGQIKLKNIPPLPRGVPKIEVTFESDANGMYRVTAQDSVTRTPQSLEIIPSSGLTEKEIDRMVREGEELKNLDEMKRRKAEVTISVGELLRRGYNELRKAPEDSLSKLRKVARGEDFDLEETEQILLDVKKAISK</sequence>
<evidence type="ECO:0000305" key="1"/>
<proteinExistence type="inferred from homology"/>
<feature type="chain" id="PRO_0000078402" description="Mitochondrial-type heat shock protein 70">
    <location>
        <begin position="1"/>
        <end position="593"/>
    </location>
</feature>
<reference key="1">
    <citation type="journal article" date="2002" name="Parasitol. Int.">
        <title>Mitochondrial-type hsp70 genes of the amitochondriate protists, Giardia intestinalis, Entamoeba histolytica, and two microsporidians.</title>
        <authorList>
            <person name="Arisue N."/>
            <person name="Sanchez L.B."/>
            <person name="Weiss L.M."/>
            <person name="Muller M."/>
            <person name="Hashimoto T."/>
        </authorList>
    </citation>
    <scope>NUCLEOTIDE SEQUENCE [GENOMIC DNA]</scope>
</reference>
<dbReference type="EMBL" id="AB056660">
    <property type="protein sequence ID" value="BAB69033.1"/>
    <property type="molecule type" value="Genomic_DNA"/>
</dbReference>
<dbReference type="SMR" id="Q95YL7"/>
<dbReference type="VEuPathDB" id="MicrosporidiaDB:EHEL_110410"/>
<dbReference type="VEuPathDB" id="MicrosporidiaDB:KMI_12g18370"/>
<dbReference type="GO" id="GO:0005634">
    <property type="term" value="C:nucleus"/>
    <property type="evidence" value="ECO:0007669"/>
    <property type="project" value="UniProtKB-SubCell"/>
</dbReference>
<dbReference type="GO" id="GO:0005524">
    <property type="term" value="F:ATP binding"/>
    <property type="evidence" value="ECO:0007669"/>
    <property type="project" value="UniProtKB-KW"/>
</dbReference>
<dbReference type="GO" id="GO:0140662">
    <property type="term" value="F:ATP-dependent protein folding chaperone"/>
    <property type="evidence" value="ECO:0007669"/>
    <property type="project" value="InterPro"/>
</dbReference>
<dbReference type="CDD" id="cd10234">
    <property type="entry name" value="ASKHA_NBD_HSP70_DnaK-like"/>
    <property type="match status" value="1"/>
</dbReference>
<dbReference type="FunFam" id="2.60.34.10:FF:000012">
    <property type="entry name" value="Heat shock 70 kDa protein"/>
    <property type="match status" value="1"/>
</dbReference>
<dbReference type="FunFam" id="3.30.30.30:FF:000003">
    <property type="entry name" value="Heat shock protein 9"/>
    <property type="match status" value="1"/>
</dbReference>
<dbReference type="FunFam" id="3.30.420.40:FF:000004">
    <property type="entry name" value="Molecular chaperone DnaK"/>
    <property type="match status" value="1"/>
</dbReference>
<dbReference type="FunFam" id="3.90.640.10:FF:000003">
    <property type="entry name" value="Molecular chaperone DnaK"/>
    <property type="match status" value="1"/>
</dbReference>
<dbReference type="Gene3D" id="3.30.420.40">
    <property type="match status" value="2"/>
</dbReference>
<dbReference type="Gene3D" id="3.90.640.10">
    <property type="entry name" value="Actin, Chain A, domain 4"/>
    <property type="match status" value="1"/>
</dbReference>
<dbReference type="Gene3D" id="2.60.34.10">
    <property type="entry name" value="Substrate Binding Domain Of DNAk, Chain A, domain 1"/>
    <property type="match status" value="1"/>
</dbReference>
<dbReference type="InterPro" id="IPR043129">
    <property type="entry name" value="ATPase_NBD"/>
</dbReference>
<dbReference type="InterPro" id="IPR018181">
    <property type="entry name" value="Heat_shock_70_CS"/>
</dbReference>
<dbReference type="InterPro" id="IPR029047">
    <property type="entry name" value="HSP70_peptide-bd_sf"/>
</dbReference>
<dbReference type="InterPro" id="IPR013126">
    <property type="entry name" value="Hsp_70_fam"/>
</dbReference>
<dbReference type="NCBIfam" id="NF001413">
    <property type="entry name" value="PRK00290.1"/>
    <property type="match status" value="1"/>
</dbReference>
<dbReference type="PANTHER" id="PTHR19375">
    <property type="entry name" value="HEAT SHOCK PROTEIN 70KDA"/>
    <property type="match status" value="1"/>
</dbReference>
<dbReference type="Pfam" id="PF00012">
    <property type="entry name" value="HSP70"/>
    <property type="match status" value="1"/>
</dbReference>
<dbReference type="PRINTS" id="PR00301">
    <property type="entry name" value="HEATSHOCK70"/>
</dbReference>
<dbReference type="SUPFAM" id="SSF53067">
    <property type="entry name" value="Actin-like ATPase domain"/>
    <property type="match status" value="2"/>
</dbReference>
<dbReference type="SUPFAM" id="SSF100920">
    <property type="entry name" value="Heat shock protein 70kD (HSP70), peptide-binding domain"/>
    <property type="match status" value="1"/>
</dbReference>
<dbReference type="PROSITE" id="PS00297">
    <property type="entry name" value="HSP70_1"/>
    <property type="match status" value="1"/>
</dbReference>
<dbReference type="PROSITE" id="PS00329">
    <property type="entry name" value="HSP70_2"/>
    <property type="match status" value="1"/>
</dbReference>
<dbReference type="PROSITE" id="PS01036">
    <property type="entry name" value="HSP70_3"/>
    <property type="match status" value="1"/>
</dbReference>
<protein>
    <recommendedName>
        <fullName>Mitochondrial-type heat shock protein 70</fullName>
        <shortName>mit-hsp70</shortName>
    </recommendedName>
</protein>
<accession>Q95YL7</accession>
<name>HSP70_ENCHE</name>